<gene>
    <name evidence="1" type="primary">bamA</name>
    <name type="synonym">yaeT</name>
    <name type="ordered locus">SSPA0223</name>
</gene>
<comment type="function">
    <text evidence="1">Part of the outer membrane protein assembly complex, which is involved in assembly and insertion of beta-barrel proteins into the outer membrane. Constitutes, with BamD, the core component of the assembly machinery.</text>
</comment>
<comment type="subunit">
    <text evidence="1">Part of the Bam complex, which is composed of the outer membrane protein BamA, and four lipoproteins BamB, BamC, BamD and BamE.</text>
</comment>
<comment type="subcellular location">
    <subcellularLocation>
        <location evidence="1">Cell outer membrane</location>
    </subcellularLocation>
</comment>
<comment type="similarity">
    <text evidence="1">Belongs to the BamA family.</text>
</comment>
<reference key="1">
    <citation type="journal article" date="2009" name="BMC Genomics">
        <title>Pseudogene accumulation in the evolutionary histories of Salmonella enterica serovars Paratyphi A and Typhi.</title>
        <authorList>
            <person name="Holt K.E."/>
            <person name="Thomson N.R."/>
            <person name="Wain J."/>
            <person name="Langridge G.C."/>
            <person name="Hasan R."/>
            <person name="Bhutta Z.A."/>
            <person name="Quail M.A."/>
            <person name="Norbertczak H."/>
            <person name="Walker D."/>
            <person name="Simmonds M."/>
            <person name="White B."/>
            <person name="Bason N."/>
            <person name="Mungall K."/>
            <person name="Dougan G."/>
            <person name="Parkhill J."/>
        </authorList>
    </citation>
    <scope>NUCLEOTIDE SEQUENCE [LARGE SCALE GENOMIC DNA]</scope>
    <source>
        <strain>AKU_12601</strain>
    </source>
</reference>
<name>BAMA_SALPK</name>
<proteinExistence type="inferred from homology"/>
<feature type="signal peptide" evidence="1">
    <location>
        <begin position="1"/>
        <end position="20"/>
    </location>
</feature>
<feature type="chain" id="PRO_1000145785" description="Outer membrane protein assembly factor BamA">
    <location>
        <begin position="21"/>
        <end position="803"/>
    </location>
</feature>
<feature type="domain" description="POTRA 1" evidence="2">
    <location>
        <begin position="24"/>
        <end position="91"/>
    </location>
</feature>
<feature type="domain" description="POTRA 2" evidence="2">
    <location>
        <begin position="92"/>
        <end position="172"/>
    </location>
</feature>
<feature type="domain" description="POTRA 3" evidence="2">
    <location>
        <begin position="175"/>
        <end position="263"/>
    </location>
</feature>
<feature type="domain" description="POTRA 4" evidence="2">
    <location>
        <begin position="266"/>
        <end position="344"/>
    </location>
</feature>
<feature type="domain" description="POTRA 5" evidence="2">
    <location>
        <begin position="347"/>
        <end position="421"/>
    </location>
</feature>
<organism>
    <name type="scientific">Salmonella paratyphi A (strain AKU_12601)</name>
    <dbReference type="NCBI Taxonomy" id="554290"/>
    <lineage>
        <taxon>Bacteria</taxon>
        <taxon>Pseudomonadati</taxon>
        <taxon>Pseudomonadota</taxon>
        <taxon>Gammaproteobacteria</taxon>
        <taxon>Enterobacterales</taxon>
        <taxon>Enterobacteriaceae</taxon>
        <taxon>Salmonella</taxon>
    </lineage>
</organism>
<protein>
    <recommendedName>
        <fullName evidence="1">Outer membrane protein assembly factor BamA</fullName>
    </recommendedName>
</protein>
<sequence length="803" mass="89466">MAMKKLLIASLLFSSATVYGAEGFVVKDIHFEGLQRVAVGAALLSMPVRTGDTVNDEDISNTIRALFATGNFEDVRVLRDGNTLLVQVKERPTIASITFSGNKSVKDDMLKQNLEASGVRVGESLDRTTLSDIEKGLEDFYYSVGKYSASVKAVVTPLPRNRVDLKLVFQEGVSAKIQQINIVGNHAFSTEELISHFQLRDEVPWWNVVGDRKYQKQKLAGDLETLRSYYLDRGYARFNIDSTQVSLTPDKKGIYITVNITEGDQYKLSGVQVSGNLAGHSAEIEKLTKIEPGELYNGTKVTKMEDDIKKLLGRYGYAYPRVQSQPEINDADKTVKLRVNVDAGNRFYVRKIRFEGNDTSKDSVLRREMRQMEGAWLGSDLVDQGKERLNRLGFFETVDTDTQRVPGSPDQVDVVYKVKERNTGSFNFGIGYGTESGVSFQAGVQQDNWLGTGYSVGINGTKNDYQTYSELSVTNPYFTVDGVSLGGRIFYNDFEADDADLSDYTNKSYGTDVTLGFPINEYNTLRAGLGYVHNKLSNMQPQIAMDRYLESMGDPDASDFAADDFTFNYGWTYNKLDRGYFPTDGSRVNLTGKVTIPGSDNEYYKVSLDTATYVPIDNDHKWVVLGRTRWGYGDGLGGKEMPFYENFYAGGSSTVRGFQSNTIGPKAVYKNGAHTSWDDNDDYEDCTQESGCKSDDAVGGNAMAVASLEFITPTPFISEKYANSVRTSFFWDMGTVWDTNWDPSSAPSDVPDYSDPGNIRMSAGIALQWMSPLGPLVFSYAQPFKKYDGDKAEQFQFNIGKTW</sequence>
<evidence type="ECO:0000255" key="1">
    <source>
        <dbReference type="HAMAP-Rule" id="MF_01430"/>
    </source>
</evidence>
<evidence type="ECO:0000255" key="2">
    <source>
        <dbReference type="PROSITE-ProRule" id="PRU01115"/>
    </source>
</evidence>
<keyword id="KW-0998">Cell outer membrane</keyword>
<keyword id="KW-0472">Membrane</keyword>
<keyword id="KW-0677">Repeat</keyword>
<keyword id="KW-0732">Signal</keyword>
<keyword id="KW-0812">Transmembrane</keyword>
<keyword id="KW-1134">Transmembrane beta strand</keyword>
<accession>B5BAN4</accession>
<dbReference type="EMBL" id="FM200053">
    <property type="protein sequence ID" value="CAR58337.1"/>
    <property type="molecule type" value="Genomic_DNA"/>
</dbReference>
<dbReference type="RefSeq" id="WP_001240922.1">
    <property type="nucleotide sequence ID" value="NC_011147.1"/>
</dbReference>
<dbReference type="SMR" id="B5BAN4"/>
<dbReference type="KEGG" id="sek:SSPA0223"/>
<dbReference type="HOGENOM" id="CLU_007664_1_0_6"/>
<dbReference type="Proteomes" id="UP000001869">
    <property type="component" value="Chromosome"/>
</dbReference>
<dbReference type="GO" id="GO:1990063">
    <property type="term" value="C:Bam protein complex"/>
    <property type="evidence" value="ECO:0007669"/>
    <property type="project" value="TreeGrafter"/>
</dbReference>
<dbReference type="GO" id="GO:0043165">
    <property type="term" value="P:Gram-negative-bacterium-type cell outer membrane assembly"/>
    <property type="evidence" value="ECO:0007669"/>
    <property type="project" value="UniProtKB-UniRule"/>
</dbReference>
<dbReference type="GO" id="GO:0051205">
    <property type="term" value="P:protein insertion into membrane"/>
    <property type="evidence" value="ECO:0007669"/>
    <property type="project" value="UniProtKB-UniRule"/>
</dbReference>
<dbReference type="FunFam" id="2.40.160.50:FF:000001">
    <property type="entry name" value="Outer membrane protein assembly factor BamA"/>
    <property type="match status" value="1"/>
</dbReference>
<dbReference type="FunFam" id="3.10.20.310:FF:000001">
    <property type="entry name" value="Outer membrane protein assembly factor BamA"/>
    <property type="match status" value="1"/>
</dbReference>
<dbReference type="FunFam" id="3.10.20.310:FF:000002">
    <property type="entry name" value="Outer membrane protein assembly factor BamA"/>
    <property type="match status" value="1"/>
</dbReference>
<dbReference type="FunFam" id="3.10.20.310:FF:000003">
    <property type="entry name" value="Outer membrane protein assembly factor BamA"/>
    <property type="match status" value="1"/>
</dbReference>
<dbReference type="FunFam" id="3.10.20.310:FF:000004">
    <property type="entry name" value="Outer membrane protein assembly factor BamA"/>
    <property type="match status" value="1"/>
</dbReference>
<dbReference type="FunFam" id="3.10.20.310:FF:000005">
    <property type="entry name" value="Outer membrane protein assembly factor BamA"/>
    <property type="match status" value="1"/>
</dbReference>
<dbReference type="Gene3D" id="3.10.20.310">
    <property type="entry name" value="membrane protein fhac"/>
    <property type="match status" value="5"/>
</dbReference>
<dbReference type="Gene3D" id="2.40.160.50">
    <property type="entry name" value="membrane protein fhac: a member of the omp85/tpsb transporter family"/>
    <property type="match status" value="1"/>
</dbReference>
<dbReference type="HAMAP" id="MF_01430">
    <property type="entry name" value="OM_assembly_BamA"/>
    <property type="match status" value="1"/>
</dbReference>
<dbReference type="InterPro" id="IPR000184">
    <property type="entry name" value="Bac_surfAg_D15"/>
</dbReference>
<dbReference type="InterPro" id="IPR010827">
    <property type="entry name" value="BamA/TamA_POTRA"/>
</dbReference>
<dbReference type="InterPro" id="IPR039910">
    <property type="entry name" value="D15-like"/>
</dbReference>
<dbReference type="InterPro" id="IPR023707">
    <property type="entry name" value="OM_assembly_BamA"/>
</dbReference>
<dbReference type="InterPro" id="IPR034746">
    <property type="entry name" value="POTRA"/>
</dbReference>
<dbReference type="NCBIfam" id="TIGR03303">
    <property type="entry name" value="OM_YaeT"/>
    <property type="match status" value="1"/>
</dbReference>
<dbReference type="NCBIfam" id="NF008287">
    <property type="entry name" value="PRK11067.1"/>
    <property type="match status" value="1"/>
</dbReference>
<dbReference type="PANTHER" id="PTHR12815:SF23">
    <property type="entry name" value="OUTER MEMBRANE PROTEIN ASSEMBLY FACTOR BAMA"/>
    <property type="match status" value="1"/>
</dbReference>
<dbReference type="PANTHER" id="PTHR12815">
    <property type="entry name" value="SORTING AND ASSEMBLY MACHINERY SAMM50 PROTEIN FAMILY MEMBER"/>
    <property type="match status" value="1"/>
</dbReference>
<dbReference type="Pfam" id="PF01103">
    <property type="entry name" value="Omp85"/>
    <property type="match status" value="1"/>
</dbReference>
<dbReference type="Pfam" id="PF07244">
    <property type="entry name" value="POTRA"/>
    <property type="match status" value="4"/>
</dbReference>
<dbReference type="PIRSF" id="PIRSF006076">
    <property type="entry name" value="OM_assembly_OMP85"/>
    <property type="match status" value="1"/>
</dbReference>
<dbReference type="PROSITE" id="PS51779">
    <property type="entry name" value="POTRA"/>
    <property type="match status" value="5"/>
</dbReference>